<keyword id="KW-0030">Aminoacyl-tRNA synthetase</keyword>
<keyword id="KW-0067">ATP-binding</keyword>
<keyword id="KW-0963">Cytoplasm</keyword>
<keyword id="KW-0436">Ligase</keyword>
<keyword id="KW-0460">Magnesium</keyword>
<keyword id="KW-0479">Metal-binding</keyword>
<keyword id="KW-0547">Nucleotide-binding</keyword>
<keyword id="KW-0648">Protein biosynthesis</keyword>
<accession>Q3K1I9</accession>
<reference key="1">
    <citation type="journal article" date="2005" name="Proc. Natl. Acad. Sci. U.S.A.">
        <title>Genome analysis of multiple pathogenic isolates of Streptococcus agalactiae: implications for the microbial 'pan-genome'.</title>
        <authorList>
            <person name="Tettelin H."/>
            <person name="Masignani V."/>
            <person name="Cieslewicz M.J."/>
            <person name="Donati C."/>
            <person name="Medini D."/>
            <person name="Ward N.L."/>
            <person name="Angiuoli S.V."/>
            <person name="Crabtree J."/>
            <person name="Jones A.L."/>
            <person name="Durkin A.S."/>
            <person name="DeBoy R.T."/>
            <person name="Davidsen T.M."/>
            <person name="Mora M."/>
            <person name="Scarselli M."/>
            <person name="Margarit y Ros I."/>
            <person name="Peterson J.D."/>
            <person name="Hauser C.R."/>
            <person name="Sundaram J.P."/>
            <person name="Nelson W.C."/>
            <person name="Madupu R."/>
            <person name="Brinkac L.M."/>
            <person name="Dodson R.J."/>
            <person name="Rosovitz M.J."/>
            <person name="Sullivan S.A."/>
            <person name="Daugherty S.C."/>
            <person name="Haft D.H."/>
            <person name="Selengut J."/>
            <person name="Gwinn M.L."/>
            <person name="Zhou L."/>
            <person name="Zafar N."/>
            <person name="Khouri H."/>
            <person name="Radune D."/>
            <person name="Dimitrov G."/>
            <person name="Watkins K."/>
            <person name="O'Connor K.J."/>
            <person name="Smith S."/>
            <person name="Utterback T.R."/>
            <person name="White O."/>
            <person name="Rubens C.E."/>
            <person name="Grandi G."/>
            <person name="Madoff L.C."/>
            <person name="Kasper D.L."/>
            <person name="Telford J.L."/>
            <person name="Wessels M.R."/>
            <person name="Rappuoli R."/>
            <person name="Fraser C.M."/>
        </authorList>
    </citation>
    <scope>NUCLEOTIDE SEQUENCE [LARGE SCALE GENOMIC DNA]</scope>
    <source>
        <strain>ATCC 27591 / A909 / CDC SS700</strain>
    </source>
</reference>
<comment type="catalytic activity">
    <reaction evidence="1">
        <text>tRNA(Phe) + L-phenylalanine + ATP = L-phenylalanyl-tRNA(Phe) + AMP + diphosphate + H(+)</text>
        <dbReference type="Rhea" id="RHEA:19413"/>
        <dbReference type="Rhea" id="RHEA-COMP:9668"/>
        <dbReference type="Rhea" id="RHEA-COMP:9699"/>
        <dbReference type="ChEBI" id="CHEBI:15378"/>
        <dbReference type="ChEBI" id="CHEBI:30616"/>
        <dbReference type="ChEBI" id="CHEBI:33019"/>
        <dbReference type="ChEBI" id="CHEBI:58095"/>
        <dbReference type="ChEBI" id="CHEBI:78442"/>
        <dbReference type="ChEBI" id="CHEBI:78531"/>
        <dbReference type="ChEBI" id="CHEBI:456215"/>
        <dbReference type="EC" id="6.1.1.20"/>
    </reaction>
</comment>
<comment type="cofactor">
    <cofactor evidence="1">
        <name>Mg(2+)</name>
        <dbReference type="ChEBI" id="CHEBI:18420"/>
    </cofactor>
    <text evidence="1">Binds 2 magnesium ions per tetramer.</text>
</comment>
<comment type="subunit">
    <text evidence="1">Tetramer of two alpha and two beta subunits.</text>
</comment>
<comment type="subcellular location">
    <subcellularLocation>
        <location evidence="1">Cytoplasm</location>
    </subcellularLocation>
</comment>
<comment type="similarity">
    <text evidence="1">Belongs to the class-II aminoacyl-tRNA synthetase family. Phe-tRNA synthetase alpha subunit type 1 subfamily.</text>
</comment>
<name>SYFA_STRA1</name>
<gene>
    <name evidence="1" type="primary">pheS</name>
    <name type="ordered locus">SAK_0992</name>
</gene>
<organism>
    <name type="scientific">Streptococcus agalactiae serotype Ia (strain ATCC 27591 / A909 / CDC SS700)</name>
    <dbReference type="NCBI Taxonomy" id="205921"/>
    <lineage>
        <taxon>Bacteria</taxon>
        <taxon>Bacillati</taxon>
        <taxon>Bacillota</taxon>
        <taxon>Bacilli</taxon>
        <taxon>Lactobacillales</taxon>
        <taxon>Streptococcaceae</taxon>
        <taxon>Streptococcus</taxon>
    </lineage>
</organism>
<protein>
    <recommendedName>
        <fullName evidence="1">Phenylalanine--tRNA ligase alpha subunit</fullName>
        <ecNumber evidence="1">6.1.1.20</ecNumber>
    </recommendedName>
    <alternativeName>
        <fullName evidence="1">Phenylalanyl-tRNA synthetase alpha subunit</fullName>
        <shortName evidence="1">PheRS</shortName>
    </alternativeName>
</protein>
<sequence>MDLQKQLEELKISTQEKLKEMTGNHTKELQDLRVQVLGKKGSLTELLKGLKDLSNDLRPVVGKQVNEVRDILTKAFEEQAKVVEAAKIQAQLESESVDVTLPGRQMTLGHRHVLTQTSEEIEDIFLGMGFQVVDGFEVEKDYYNFERMNLPKDHPARDMQDTFYITEEILLRTHTSPVQARTMDQHDFSKGPLKMISPGRVFRRDTDDATHSHQFHQIEGLVVGENISMGDLKGTLQLISQKMFGAERKIRLRPSYFPFTEPSVEVDVSCFKCGGKGCNVCKQTGWIEILGAGMVHPSVLEMSGIDSEKYSGFAFGLGQERIAMLRYGINDIRGFYQGDVRFTDQF</sequence>
<evidence type="ECO:0000255" key="1">
    <source>
        <dbReference type="HAMAP-Rule" id="MF_00281"/>
    </source>
</evidence>
<dbReference type="EC" id="6.1.1.20" evidence="1"/>
<dbReference type="EMBL" id="CP000114">
    <property type="protein sequence ID" value="ABA46230.1"/>
    <property type="molecule type" value="Genomic_DNA"/>
</dbReference>
<dbReference type="RefSeq" id="WP_000365655.1">
    <property type="nucleotide sequence ID" value="NC_007432.1"/>
</dbReference>
<dbReference type="SMR" id="Q3K1I9"/>
<dbReference type="GeneID" id="66885819"/>
<dbReference type="KEGG" id="sak:SAK_0992"/>
<dbReference type="HOGENOM" id="CLU_025086_0_1_9"/>
<dbReference type="GO" id="GO:0005737">
    <property type="term" value="C:cytoplasm"/>
    <property type="evidence" value="ECO:0007669"/>
    <property type="project" value="UniProtKB-SubCell"/>
</dbReference>
<dbReference type="GO" id="GO:0005524">
    <property type="term" value="F:ATP binding"/>
    <property type="evidence" value="ECO:0007669"/>
    <property type="project" value="UniProtKB-UniRule"/>
</dbReference>
<dbReference type="GO" id="GO:0140096">
    <property type="term" value="F:catalytic activity, acting on a protein"/>
    <property type="evidence" value="ECO:0007669"/>
    <property type="project" value="UniProtKB-ARBA"/>
</dbReference>
<dbReference type="GO" id="GO:0000287">
    <property type="term" value="F:magnesium ion binding"/>
    <property type="evidence" value="ECO:0007669"/>
    <property type="project" value="UniProtKB-UniRule"/>
</dbReference>
<dbReference type="GO" id="GO:0004826">
    <property type="term" value="F:phenylalanine-tRNA ligase activity"/>
    <property type="evidence" value="ECO:0007669"/>
    <property type="project" value="UniProtKB-UniRule"/>
</dbReference>
<dbReference type="GO" id="GO:0016740">
    <property type="term" value="F:transferase activity"/>
    <property type="evidence" value="ECO:0007669"/>
    <property type="project" value="UniProtKB-ARBA"/>
</dbReference>
<dbReference type="GO" id="GO:0000049">
    <property type="term" value="F:tRNA binding"/>
    <property type="evidence" value="ECO:0007669"/>
    <property type="project" value="InterPro"/>
</dbReference>
<dbReference type="GO" id="GO:0006432">
    <property type="term" value="P:phenylalanyl-tRNA aminoacylation"/>
    <property type="evidence" value="ECO:0007669"/>
    <property type="project" value="UniProtKB-UniRule"/>
</dbReference>
<dbReference type="CDD" id="cd00496">
    <property type="entry name" value="PheRS_alpha_core"/>
    <property type="match status" value="1"/>
</dbReference>
<dbReference type="FunFam" id="3.30.930.10:FF:000003">
    <property type="entry name" value="Phenylalanine--tRNA ligase alpha subunit"/>
    <property type="match status" value="1"/>
</dbReference>
<dbReference type="Gene3D" id="3.30.930.10">
    <property type="entry name" value="Bira Bifunctional Protein, Domain 2"/>
    <property type="match status" value="1"/>
</dbReference>
<dbReference type="HAMAP" id="MF_00281">
    <property type="entry name" value="Phe_tRNA_synth_alpha1"/>
    <property type="match status" value="1"/>
</dbReference>
<dbReference type="InterPro" id="IPR006195">
    <property type="entry name" value="aa-tRNA-synth_II"/>
</dbReference>
<dbReference type="InterPro" id="IPR045864">
    <property type="entry name" value="aa-tRNA-synth_II/BPL/LPL"/>
</dbReference>
<dbReference type="InterPro" id="IPR004529">
    <property type="entry name" value="Phe-tRNA-synth_IIc_asu"/>
</dbReference>
<dbReference type="InterPro" id="IPR004188">
    <property type="entry name" value="Phe-tRNA_ligase_II_N"/>
</dbReference>
<dbReference type="InterPro" id="IPR022911">
    <property type="entry name" value="Phe_tRNA_ligase_alpha1_bac"/>
</dbReference>
<dbReference type="InterPro" id="IPR002319">
    <property type="entry name" value="Phenylalanyl-tRNA_Synthase"/>
</dbReference>
<dbReference type="InterPro" id="IPR010978">
    <property type="entry name" value="tRNA-bd_arm"/>
</dbReference>
<dbReference type="NCBIfam" id="TIGR00468">
    <property type="entry name" value="pheS"/>
    <property type="match status" value="1"/>
</dbReference>
<dbReference type="PANTHER" id="PTHR11538:SF41">
    <property type="entry name" value="PHENYLALANINE--TRNA LIGASE, MITOCHONDRIAL"/>
    <property type="match status" value="1"/>
</dbReference>
<dbReference type="PANTHER" id="PTHR11538">
    <property type="entry name" value="PHENYLALANYL-TRNA SYNTHETASE"/>
    <property type="match status" value="1"/>
</dbReference>
<dbReference type="Pfam" id="PF02912">
    <property type="entry name" value="Phe_tRNA-synt_N"/>
    <property type="match status" value="1"/>
</dbReference>
<dbReference type="Pfam" id="PF01409">
    <property type="entry name" value="tRNA-synt_2d"/>
    <property type="match status" value="1"/>
</dbReference>
<dbReference type="SUPFAM" id="SSF55681">
    <property type="entry name" value="Class II aaRS and biotin synthetases"/>
    <property type="match status" value="1"/>
</dbReference>
<dbReference type="SUPFAM" id="SSF46589">
    <property type="entry name" value="tRNA-binding arm"/>
    <property type="match status" value="1"/>
</dbReference>
<dbReference type="PROSITE" id="PS50862">
    <property type="entry name" value="AA_TRNA_LIGASE_II"/>
    <property type="match status" value="1"/>
</dbReference>
<feature type="chain" id="PRO_0000232030" description="Phenylalanine--tRNA ligase alpha subunit">
    <location>
        <begin position="1"/>
        <end position="346"/>
    </location>
</feature>
<feature type="binding site" evidence="1">
    <location>
        <position position="261"/>
    </location>
    <ligand>
        <name>Mg(2+)</name>
        <dbReference type="ChEBI" id="CHEBI:18420"/>
        <note>shared with beta subunit</note>
    </ligand>
</feature>
<proteinExistence type="inferred from homology"/>